<dbReference type="EMBL" id="AE016820">
    <property type="protein sequence ID" value="AAS54364.2"/>
    <property type="molecule type" value="Genomic_DNA"/>
</dbReference>
<dbReference type="RefSeq" id="NP_986540.2">
    <property type="nucleotide sequence ID" value="NM_211602.2"/>
</dbReference>
<dbReference type="SMR" id="Q751A7"/>
<dbReference type="FunCoup" id="Q751A7">
    <property type="interactions" value="105"/>
</dbReference>
<dbReference type="STRING" id="284811.Q751A7"/>
<dbReference type="EnsemblFungi" id="AAS54364">
    <property type="protein sequence ID" value="AAS54364"/>
    <property type="gene ID" value="AGOS_AGL127C"/>
</dbReference>
<dbReference type="GeneID" id="4622839"/>
<dbReference type="KEGG" id="ago:AGOS_AGL127C"/>
<dbReference type="eggNOG" id="ENOG502S4IW">
    <property type="taxonomic scope" value="Eukaryota"/>
</dbReference>
<dbReference type="HOGENOM" id="CLU_676103_0_0_1"/>
<dbReference type="InParanoid" id="Q751A7"/>
<dbReference type="OMA" id="AMAEIAC"/>
<dbReference type="OrthoDB" id="4070577at2759"/>
<dbReference type="Proteomes" id="UP000000591">
    <property type="component" value="Chromosome VII"/>
</dbReference>
<dbReference type="GO" id="GO:0005737">
    <property type="term" value="C:cytoplasm"/>
    <property type="evidence" value="ECO:0007669"/>
    <property type="project" value="UniProtKB-SubCell"/>
</dbReference>
<dbReference type="GO" id="GO:0005634">
    <property type="term" value="C:nucleus"/>
    <property type="evidence" value="ECO:0007669"/>
    <property type="project" value="UniProtKB-SubCell"/>
</dbReference>
<accession>Q751A7</accession>
<organism>
    <name type="scientific">Eremothecium gossypii (strain ATCC 10895 / CBS 109.51 / FGSC 9923 / NRRL Y-1056)</name>
    <name type="common">Yeast</name>
    <name type="synonym">Ashbya gossypii</name>
    <dbReference type="NCBI Taxonomy" id="284811"/>
    <lineage>
        <taxon>Eukaryota</taxon>
        <taxon>Fungi</taxon>
        <taxon>Dikarya</taxon>
        <taxon>Ascomycota</taxon>
        <taxon>Saccharomycotina</taxon>
        <taxon>Saccharomycetes</taxon>
        <taxon>Saccharomycetales</taxon>
        <taxon>Saccharomycetaceae</taxon>
        <taxon>Eremothecium</taxon>
    </lineage>
</organism>
<keyword id="KW-0963">Cytoplasm</keyword>
<keyword id="KW-0539">Nucleus</keyword>
<keyword id="KW-1185">Reference proteome</keyword>
<reference key="1">
    <citation type="journal article" date="2004" name="Science">
        <title>The Ashbya gossypii genome as a tool for mapping the ancient Saccharomyces cerevisiae genome.</title>
        <authorList>
            <person name="Dietrich F.S."/>
            <person name="Voegeli S."/>
            <person name="Brachat S."/>
            <person name="Lerch A."/>
            <person name="Gates K."/>
            <person name="Steiner S."/>
            <person name="Mohr C."/>
            <person name="Poehlmann R."/>
            <person name="Luedi P."/>
            <person name="Choi S."/>
            <person name="Wing R.A."/>
            <person name="Flavier A."/>
            <person name="Gaffney T.D."/>
            <person name="Philippsen P."/>
        </authorList>
    </citation>
    <scope>NUCLEOTIDE SEQUENCE [LARGE SCALE GENOMIC DNA]</scope>
    <source>
        <strain>ATCC 10895 / CBS 109.51 / FGSC 9923 / NRRL Y-1056</strain>
    </source>
</reference>
<reference key="2">
    <citation type="journal article" date="2013" name="G3 (Bethesda)">
        <title>Genomes of Ashbya fungi isolated from insects reveal four mating-type loci, numerous translocations, lack of transposons, and distinct gene duplications.</title>
        <authorList>
            <person name="Dietrich F.S."/>
            <person name="Voegeli S."/>
            <person name="Kuo S."/>
            <person name="Philippsen P."/>
        </authorList>
    </citation>
    <scope>GENOME REANNOTATION</scope>
    <scope>SEQUENCE REVISION TO 324</scope>
    <source>
        <strain>ATCC 10895 / CBS 109.51 / FGSC 9923 / NRRL Y-1056</strain>
    </source>
</reference>
<gene>
    <name type="primary">ATC1</name>
    <name type="ordered locus">AGL127C</name>
</gene>
<protein>
    <recommendedName>
        <fullName>Protein ATC1/LIC4</fullName>
    </recommendedName>
</protein>
<proteinExistence type="inferred from homology"/>
<comment type="function">
    <text evidence="1">Involved in cation homeostasis and in the regulation of the cation stress signaling cascades.</text>
</comment>
<comment type="subcellular location">
    <subcellularLocation>
        <location evidence="1">Cytoplasm</location>
    </subcellularLocation>
    <subcellularLocation>
        <location evidence="1">Nucleus</location>
    </subcellularLocation>
</comment>
<feature type="chain" id="PRO_0000076235" description="Protein ATC1/LIC4">
    <location>
        <begin position="1"/>
        <end position="407"/>
    </location>
</feature>
<sequence>MSVEGKNVDSYSGLTASVQHEHTHPVHNRGVALETTTQHAFITVASQLKPDLKGEDEEHNLELELHKFLSQHNHGPPSSGTTGTTLAGVPDFSASHNISHRDEMAEAIEKAMAEIACPELWNNDHSSAGATVGGDVHLDTLTMDGILGNEEPFVQVHEGALGSVDMDGQRYPHGRNSLSSIVGSKAIIQQSMDIHPTAQGGARSRQSTEEVGMHICATPNGKRKNAGVASSQATVKRSRLFYETISPESLSPLSDNSDFLKAMDTKGSGVQNVPISTSVTAGALGHGAKNIKGYQNASKINMASNIPKEKLQVHSTPPVVSILPEKLTQEFTMQQVMETKRRIINTHKLILNFNFLKESYTRSCSELKRTVFKLKESECHRARLAKENEQLKRLVIELNERMKNPSK</sequence>
<evidence type="ECO:0000250" key="1"/>
<name>LIC4_EREGS</name>